<proteinExistence type="inferred from homology"/>
<protein>
    <recommendedName>
        <fullName evidence="1">tRNA-specific 2-thiouridylase MnmA</fullName>
        <ecNumber evidence="1">2.8.1.13</ecNumber>
    </recommendedName>
</protein>
<name>MNMA_HAHCH</name>
<keyword id="KW-0067">ATP-binding</keyword>
<keyword id="KW-0963">Cytoplasm</keyword>
<keyword id="KW-1015">Disulfide bond</keyword>
<keyword id="KW-0547">Nucleotide-binding</keyword>
<keyword id="KW-1185">Reference proteome</keyword>
<keyword id="KW-0694">RNA-binding</keyword>
<keyword id="KW-0808">Transferase</keyword>
<keyword id="KW-0819">tRNA processing</keyword>
<keyword id="KW-0820">tRNA-binding</keyword>
<accession>Q2SJL8</accession>
<dbReference type="EC" id="2.8.1.13" evidence="1"/>
<dbReference type="EMBL" id="CP000155">
    <property type="protein sequence ID" value="ABC29156.1"/>
    <property type="molecule type" value="Genomic_DNA"/>
</dbReference>
<dbReference type="RefSeq" id="WP_011396225.1">
    <property type="nucleotide sequence ID" value="NC_007645.1"/>
</dbReference>
<dbReference type="SMR" id="Q2SJL8"/>
<dbReference type="STRING" id="349521.HCH_02333"/>
<dbReference type="KEGG" id="hch:HCH_02333"/>
<dbReference type="eggNOG" id="COG0482">
    <property type="taxonomic scope" value="Bacteria"/>
</dbReference>
<dbReference type="HOGENOM" id="CLU_035188_1_0_6"/>
<dbReference type="OrthoDB" id="9800696at2"/>
<dbReference type="Proteomes" id="UP000000238">
    <property type="component" value="Chromosome"/>
</dbReference>
<dbReference type="GO" id="GO:0005737">
    <property type="term" value="C:cytoplasm"/>
    <property type="evidence" value="ECO:0007669"/>
    <property type="project" value="UniProtKB-SubCell"/>
</dbReference>
<dbReference type="GO" id="GO:0005524">
    <property type="term" value="F:ATP binding"/>
    <property type="evidence" value="ECO:0007669"/>
    <property type="project" value="UniProtKB-KW"/>
</dbReference>
<dbReference type="GO" id="GO:0000049">
    <property type="term" value="F:tRNA binding"/>
    <property type="evidence" value="ECO:0007669"/>
    <property type="project" value="UniProtKB-KW"/>
</dbReference>
<dbReference type="GO" id="GO:0103016">
    <property type="term" value="F:tRNA-uridine 2-sulfurtransferase activity"/>
    <property type="evidence" value="ECO:0007669"/>
    <property type="project" value="UniProtKB-EC"/>
</dbReference>
<dbReference type="GO" id="GO:0002143">
    <property type="term" value="P:tRNA wobble position uridine thiolation"/>
    <property type="evidence" value="ECO:0007669"/>
    <property type="project" value="TreeGrafter"/>
</dbReference>
<dbReference type="CDD" id="cd01998">
    <property type="entry name" value="MnmA_TRMU-like"/>
    <property type="match status" value="1"/>
</dbReference>
<dbReference type="FunFam" id="2.30.30.280:FF:000001">
    <property type="entry name" value="tRNA-specific 2-thiouridylase MnmA"/>
    <property type="match status" value="1"/>
</dbReference>
<dbReference type="FunFam" id="2.40.30.10:FF:000023">
    <property type="entry name" value="tRNA-specific 2-thiouridylase MnmA"/>
    <property type="match status" value="1"/>
</dbReference>
<dbReference type="FunFam" id="3.40.50.620:FF:000004">
    <property type="entry name" value="tRNA-specific 2-thiouridylase MnmA"/>
    <property type="match status" value="1"/>
</dbReference>
<dbReference type="Gene3D" id="2.30.30.280">
    <property type="entry name" value="Adenine nucleotide alpha hydrolases-like domains"/>
    <property type="match status" value="1"/>
</dbReference>
<dbReference type="Gene3D" id="3.40.50.620">
    <property type="entry name" value="HUPs"/>
    <property type="match status" value="1"/>
</dbReference>
<dbReference type="Gene3D" id="2.40.30.10">
    <property type="entry name" value="Translation factors"/>
    <property type="match status" value="1"/>
</dbReference>
<dbReference type="HAMAP" id="MF_00144">
    <property type="entry name" value="tRNA_thiouridyl_MnmA"/>
    <property type="match status" value="1"/>
</dbReference>
<dbReference type="InterPro" id="IPR004506">
    <property type="entry name" value="MnmA-like"/>
</dbReference>
<dbReference type="InterPro" id="IPR046885">
    <property type="entry name" value="MnmA-like_C"/>
</dbReference>
<dbReference type="InterPro" id="IPR046884">
    <property type="entry name" value="MnmA-like_central"/>
</dbReference>
<dbReference type="InterPro" id="IPR023382">
    <property type="entry name" value="MnmA-like_central_sf"/>
</dbReference>
<dbReference type="InterPro" id="IPR014729">
    <property type="entry name" value="Rossmann-like_a/b/a_fold"/>
</dbReference>
<dbReference type="NCBIfam" id="NF001138">
    <property type="entry name" value="PRK00143.1"/>
    <property type="match status" value="1"/>
</dbReference>
<dbReference type="NCBIfam" id="TIGR00420">
    <property type="entry name" value="trmU"/>
    <property type="match status" value="1"/>
</dbReference>
<dbReference type="PANTHER" id="PTHR11933:SF5">
    <property type="entry name" value="MITOCHONDRIAL TRNA-SPECIFIC 2-THIOURIDYLASE 1"/>
    <property type="match status" value="1"/>
</dbReference>
<dbReference type="PANTHER" id="PTHR11933">
    <property type="entry name" value="TRNA 5-METHYLAMINOMETHYL-2-THIOURIDYLATE -METHYLTRANSFERASE"/>
    <property type="match status" value="1"/>
</dbReference>
<dbReference type="Pfam" id="PF03054">
    <property type="entry name" value="tRNA_Me_trans"/>
    <property type="match status" value="1"/>
</dbReference>
<dbReference type="Pfam" id="PF20258">
    <property type="entry name" value="tRNA_Me_trans_C"/>
    <property type="match status" value="1"/>
</dbReference>
<dbReference type="Pfam" id="PF20259">
    <property type="entry name" value="tRNA_Me_trans_M"/>
    <property type="match status" value="1"/>
</dbReference>
<dbReference type="SUPFAM" id="SSF52402">
    <property type="entry name" value="Adenine nucleotide alpha hydrolases-like"/>
    <property type="match status" value="1"/>
</dbReference>
<evidence type="ECO:0000255" key="1">
    <source>
        <dbReference type="HAMAP-Rule" id="MF_00144"/>
    </source>
</evidence>
<gene>
    <name evidence="1" type="primary">mnmA</name>
    <name type="ordered locus">HCH_02333</name>
</gene>
<comment type="function">
    <text evidence="1">Catalyzes the 2-thiolation of uridine at the wobble position (U34) of tRNA, leading to the formation of s(2)U34.</text>
</comment>
<comment type="catalytic activity">
    <reaction evidence="1">
        <text>S-sulfanyl-L-cysteinyl-[protein] + uridine(34) in tRNA + AH2 + ATP = 2-thiouridine(34) in tRNA + L-cysteinyl-[protein] + A + AMP + diphosphate + H(+)</text>
        <dbReference type="Rhea" id="RHEA:47032"/>
        <dbReference type="Rhea" id="RHEA-COMP:10131"/>
        <dbReference type="Rhea" id="RHEA-COMP:11726"/>
        <dbReference type="Rhea" id="RHEA-COMP:11727"/>
        <dbReference type="Rhea" id="RHEA-COMP:11728"/>
        <dbReference type="ChEBI" id="CHEBI:13193"/>
        <dbReference type="ChEBI" id="CHEBI:15378"/>
        <dbReference type="ChEBI" id="CHEBI:17499"/>
        <dbReference type="ChEBI" id="CHEBI:29950"/>
        <dbReference type="ChEBI" id="CHEBI:30616"/>
        <dbReference type="ChEBI" id="CHEBI:33019"/>
        <dbReference type="ChEBI" id="CHEBI:61963"/>
        <dbReference type="ChEBI" id="CHEBI:65315"/>
        <dbReference type="ChEBI" id="CHEBI:87170"/>
        <dbReference type="ChEBI" id="CHEBI:456215"/>
        <dbReference type="EC" id="2.8.1.13"/>
    </reaction>
</comment>
<comment type="subcellular location">
    <subcellularLocation>
        <location evidence="1">Cytoplasm</location>
    </subcellularLocation>
</comment>
<comment type="similarity">
    <text evidence="1">Belongs to the MnmA/TRMU family.</text>
</comment>
<sequence>MSTHRNQRVIVGISGGVDSSVSAYLLKALGYEVEGLFMKNWDEDDGTEYCTALSDLEDAQKVCDKLGIKLHTASFSAEYWDRVFEHFLDEYRAGRTPNPDILCNKEIKFKAFLDYAQALGGDLIATGHYAQFSRFGEHTYLMKGADPSKEQSYFLHAVPGQALARTLFPVGGLLKKEVRRIARELDLITHDKKDSTGICFIGERKFSDFLKTYLPAQPGKIVTDKGEEIGRHQGLMYHTIGQRQGLGIGGLKGYDDAPWYVVEKDLDNNELVVAQGGDHPRLFSAGLTASKLDWINGVPAKSSFSCYAKTRYRQPDQLCRVDVQDGGVRVTFDKRQRAVTPGQSVVFYDGARCLGGGVIESVFK</sequence>
<organism>
    <name type="scientific">Hahella chejuensis (strain KCTC 2396)</name>
    <dbReference type="NCBI Taxonomy" id="349521"/>
    <lineage>
        <taxon>Bacteria</taxon>
        <taxon>Pseudomonadati</taxon>
        <taxon>Pseudomonadota</taxon>
        <taxon>Gammaproteobacteria</taxon>
        <taxon>Oceanospirillales</taxon>
        <taxon>Hahellaceae</taxon>
        <taxon>Hahella</taxon>
    </lineage>
</organism>
<reference key="1">
    <citation type="journal article" date="2005" name="Nucleic Acids Res.">
        <title>Genomic blueprint of Hahella chejuensis, a marine microbe producing an algicidal agent.</title>
        <authorList>
            <person name="Jeong H."/>
            <person name="Yim J.H."/>
            <person name="Lee C."/>
            <person name="Choi S.-H."/>
            <person name="Park Y.K."/>
            <person name="Yoon S.H."/>
            <person name="Hur C.-G."/>
            <person name="Kang H.-Y."/>
            <person name="Kim D."/>
            <person name="Lee H.H."/>
            <person name="Park K.H."/>
            <person name="Park S.-H."/>
            <person name="Park H.-S."/>
            <person name="Lee H.K."/>
            <person name="Oh T.K."/>
            <person name="Kim J.F."/>
        </authorList>
    </citation>
    <scope>NUCLEOTIDE SEQUENCE [LARGE SCALE GENOMIC DNA]</scope>
    <source>
        <strain>KCTC 2396</strain>
    </source>
</reference>
<feature type="chain" id="PRO_0000349657" description="tRNA-specific 2-thiouridylase MnmA">
    <location>
        <begin position="1"/>
        <end position="364"/>
    </location>
</feature>
<feature type="region of interest" description="Interaction with target base in tRNA" evidence="1">
    <location>
        <begin position="98"/>
        <end position="100"/>
    </location>
</feature>
<feature type="region of interest" description="Interaction with tRNA" evidence="1">
    <location>
        <begin position="149"/>
        <end position="151"/>
    </location>
</feature>
<feature type="region of interest" description="Interaction with tRNA" evidence="1">
    <location>
        <begin position="311"/>
        <end position="312"/>
    </location>
</feature>
<feature type="active site" description="Nucleophile" evidence="1">
    <location>
        <position position="103"/>
    </location>
</feature>
<feature type="active site" description="Cysteine persulfide intermediate" evidence="1">
    <location>
        <position position="199"/>
    </location>
</feature>
<feature type="binding site" evidence="1">
    <location>
        <begin position="12"/>
        <end position="19"/>
    </location>
    <ligand>
        <name>ATP</name>
        <dbReference type="ChEBI" id="CHEBI:30616"/>
    </ligand>
</feature>
<feature type="binding site" evidence="1">
    <location>
        <position position="38"/>
    </location>
    <ligand>
        <name>ATP</name>
        <dbReference type="ChEBI" id="CHEBI:30616"/>
    </ligand>
</feature>
<feature type="binding site" evidence="1">
    <location>
        <position position="127"/>
    </location>
    <ligand>
        <name>ATP</name>
        <dbReference type="ChEBI" id="CHEBI:30616"/>
    </ligand>
</feature>
<feature type="site" description="Interaction with tRNA" evidence="1">
    <location>
        <position position="128"/>
    </location>
</feature>
<feature type="site" description="Interaction with tRNA" evidence="1">
    <location>
        <position position="343"/>
    </location>
</feature>
<feature type="disulfide bond" description="Alternate" evidence="1">
    <location>
        <begin position="103"/>
        <end position="199"/>
    </location>
</feature>